<comment type="function">
    <text evidence="2 3">Transcription factor that plays an essential role in both trophoblast giant cell differentiation and in cardiac morphogenesis (By similarity). Binds the DNA sequence 5'-NRTCTG-3' (non-canonical E-box) (By similarity). Acts as a transcriptional repressor of SOX15 (By similarity). In the adult, could be required for ongoing expression of cardiac-specific genes (By similarity).</text>
</comment>
<comment type="subunit">
    <text evidence="1 3">Efficient DNA binding requires dimerization with another bHLH protein. Forms homodimers and heterodimers with TCF3 gene products E12 and E47, HAND2 and HEY1, HEY2 and HEYL (hairy-related transcription factors). Interacts with MDFIC (By similarity). Interacts with SOX15; the interaction enhances HAND1-induced differentiation of trophoblast giant cells (By similarity).</text>
</comment>
<comment type="subcellular location">
    <subcellularLocation>
        <location evidence="1">Nucleus</location>
        <location evidence="1">Nucleoplasm</location>
    </subcellularLocation>
    <subcellularLocation>
        <location evidence="1">Nucleus</location>
        <location evidence="1">Nucleolus</location>
    </subcellularLocation>
    <text evidence="1">Interaction with MDFIC sequesters it into the nucleolus, preventing the transcription factor activity. Phosphorylation by PLK4 disrupts the interaction with MDFIC and releases it from the nucleolus, leading to transcription factor activity (By similarity).</text>
</comment>
<comment type="PTM">
    <text evidence="1">Phosphorylation by PLK4 disrupts the interaction with MDFIC and leads to translocation into the nucleoplasm, allowing dimerization and transcription factor activity.</text>
</comment>
<comment type="sequence caution" evidence="6">
    <conflict type="erroneous initiation">
        <sequence resource="EMBL-CDS" id="CAB94841"/>
    </conflict>
</comment>
<evidence type="ECO:0000250" key="1"/>
<evidence type="ECO:0000250" key="2">
    <source>
        <dbReference type="UniProtKB" id="O96004"/>
    </source>
</evidence>
<evidence type="ECO:0000250" key="3">
    <source>
        <dbReference type="UniProtKB" id="Q64279"/>
    </source>
</evidence>
<evidence type="ECO:0000255" key="4">
    <source>
        <dbReference type="PROSITE-ProRule" id="PRU00981"/>
    </source>
</evidence>
<evidence type="ECO:0000256" key="5">
    <source>
        <dbReference type="SAM" id="MobiDB-lite"/>
    </source>
</evidence>
<evidence type="ECO:0000305" key="6"/>
<accession>P57100</accession>
<keyword id="KW-0010">Activator</keyword>
<keyword id="KW-0217">Developmental protein</keyword>
<keyword id="KW-0238">DNA-binding</keyword>
<keyword id="KW-0539">Nucleus</keyword>
<keyword id="KW-0597">Phosphoprotein</keyword>
<keyword id="KW-1185">Reference proteome</keyword>
<keyword id="KW-0804">Transcription</keyword>
<keyword id="KW-0805">Transcription regulation</keyword>
<proteinExistence type="evidence at transcript level"/>
<dbReference type="EMBL" id="AJ291309">
    <property type="protein sequence ID" value="CAB94841.1"/>
    <property type="status" value="ALT_INIT"/>
    <property type="molecule type" value="mRNA"/>
</dbReference>
<dbReference type="SMR" id="P57100"/>
<dbReference type="FunCoup" id="P57100">
    <property type="interactions" value="790"/>
</dbReference>
<dbReference type="STRING" id="9986.ENSOCUP00000009548"/>
<dbReference type="PaxDb" id="9986-ENSOCUP00000009548"/>
<dbReference type="eggNOG" id="KOG4029">
    <property type="taxonomic scope" value="Eukaryota"/>
</dbReference>
<dbReference type="InParanoid" id="P57100"/>
<dbReference type="Proteomes" id="UP000001811">
    <property type="component" value="Unplaced"/>
</dbReference>
<dbReference type="GO" id="GO:0005730">
    <property type="term" value="C:nucleolus"/>
    <property type="evidence" value="ECO:0007669"/>
    <property type="project" value="UniProtKB-SubCell"/>
</dbReference>
<dbReference type="GO" id="GO:0005654">
    <property type="term" value="C:nucleoplasm"/>
    <property type="evidence" value="ECO:0007669"/>
    <property type="project" value="UniProtKB-SubCell"/>
</dbReference>
<dbReference type="GO" id="GO:0000981">
    <property type="term" value="F:DNA-binding transcription factor activity, RNA polymerase II-specific"/>
    <property type="evidence" value="ECO:0007669"/>
    <property type="project" value="TreeGrafter"/>
</dbReference>
<dbReference type="GO" id="GO:0046983">
    <property type="term" value="F:protein dimerization activity"/>
    <property type="evidence" value="ECO:0007669"/>
    <property type="project" value="InterPro"/>
</dbReference>
<dbReference type="GO" id="GO:0000977">
    <property type="term" value="F:RNA polymerase II transcription regulatory region sequence-specific DNA binding"/>
    <property type="evidence" value="ECO:0007669"/>
    <property type="project" value="TreeGrafter"/>
</dbReference>
<dbReference type="GO" id="GO:0007507">
    <property type="term" value="P:heart development"/>
    <property type="evidence" value="ECO:0007669"/>
    <property type="project" value="TreeGrafter"/>
</dbReference>
<dbReference type="GO" id="GO:0060707">
    <property type="term" value="P:trophoblast giant cell differentiation"/>
    <property type="evidence" value="ECO:0000250"/>
    <property type="project" value="UniProtKB"/>
</dbReference>
<dbReference type="CDD" id="cd18952">
    <property type="entry name" value="bHLH_TS_HAND1"/>
    <property type="match status" value="1"/>
</dbReference>
<dbReference type="FunFam" id="4.10.280.10:FF:000010">
    <property type="entry name" value="Scleraxis bHLH transcription factor"/>
    <property type="match status" value="1"/>
</dbReference>
<dbReference type="Gene3D" id="4.10.280.10">
    <property type="entry name" value="Helix-loop-helix DNA-binding domain"/>
    <property type="match status" value="1"/>
</dbReference>
<dbReference type="InterPro" id="IPR011598">
    <property type="entry name" value="bHLH_dom"/>
</dbReference>
<dbReference type="InterPro" id="IPR050283">
    <property type="entry name" value="E-box_TF_Regulators"/>
</dbReference>
<dbReference type="InterPro" id="IPR036638">
    <property type="entry name" value="HLH_DNA-bd_sf"/>
</dbReference>
<dbReference type="PANTHER" id="PTHR23349">
    <property type="entry name" value="BASIC HELIX-LOOP-HELIX TRANSCRIPTION FACTOR, TWIST"/>
    <property type="match status" value="1"/>
</dbReference>
<dbReference type="PANTHER" id="PTHR23349:SF3">
    <property type="entry name" value="HEART- AND NEURAL CREST DERIVATIVES-EXPRESSED PROTEIN 1"/>
    <property type="match status" value="1"/>
</dbReference>
<dbReference type="Pfam" id="PF00010">
    <property type="entry name" value="HLH"/>
    <property type="match status" value="1"/>
</dbReference>
<dbReference type="SMART" id="SM00353">
    <property type="entry name" value="HLH"/>
    <property type="match status" value="1"/>
</dbReference>
<dbReference type="SUPFAM" id="SSF47459">
    <property type="entry name" value="HLH, helix-loop-helix DNA-binding domain"/>
    <property type="match status" value="1"/>
</dbReference>
<dbReference type="PROSITE" id="PS50888">
    <property type="entry name" value="BHLH"/>
    <property type="match status" value="1"/>
</dbReference>
<gene>
    <name type="primary">HAND1</name>
    <name type="synonym">EHAND</name>
</gene>
<organism>
    <name type="scientific">Oryctolagus cuniculus</name>
    <name type="common">Rabbit</name>
    <dbReference type="NCBI Taxonomy" id="9986"/>
    <lineage>
        <taxon>Eukaryota</taxon>
        <taxon>Metazoa</taxon>
        <taxon>Chordata</taxon>
        <taxon>Craniata</taxon>
        <taxon>Vertebrata</taxon>
        <taxon>Euteleostomi</taxon>
        <taxon>Mammalia</taxon>
        <taxon>Eutheria</taxon>
        <taxon>Euarchontoglires</taxon>
        <taxon>Glires</taxon>
        <taxon>Lagomorpha</taxon>
        <taxon>Leporidae</taxon>
        <taxon>Oryctolagus</taxon>
    </lineage>
</organism>
<reference key="1">
    <citation type="submission" date="2000-06" db="EMBL/GenBank/DDBJ databases">
        <title>Immediate-early gene response to acute pressure-overload in the rabbit heart.</title>
        <authorList>
            <person name="Sayeed R.A."/>
            <person name="Grace A.A."/>
            <person name="Vandenberg J.I."/>
        </authorList>
    </citation>
    <scope>NUCLEOTIDE SEQUENCE [MRNA]</scope>
    <source>
        <strain>New Zealand white</strain>
        <tissue>Heart</tissue>
    </source>
</reference>
<protein>
    <recommendedName>
        <fullName>Heart- and neural crest derivatives-expressed protein 1</fullName>
    </recommendedName>
    <alternativeName>
        <fullName>Extraembryonic tissues, heart, autonomic nervous system and neural crest derivatives-expressed protein 1</fullName>
        <shortName>eHAND</shortName>
    </alternativeName>
</protein>
<sequence>MNLVGSYAHHHHHHHPHPAHPMLHEPFLFGPASRCHQERPYFQSWLLSPADAAPDFPTGGPPPTAAAAAATYGPDTRPGQSPGRLEALGGRLGRRKGSGPKKERRRTESINSAFAELRECIPNVPADTKLSKIKTLRLATSYIAYLMDVLAKDAQAGDPEAFKAELKKVDGGRESKRKRELQQHEGFPPALGPGEKRIKGRTGWPQQVWALELNQ</sequence>
<name>HAND1_RABIT</name>
<feature type="chain" id="PRO_0000127186" description="Heart- and neural crest derivatives-expressed protein 1">
    <location>
        <begin position="1"/>
        <end position="215"/>
    </location>
</feature>
<feature type="domain" description="bHLH" evidence="4">
    <location>
        <begin position="94"/>
        <end position="146"/>
    </location>
</feature>
<feature type="region of interest" description="Disordered" evidence="5">
    <location>
        <begin position="53"/>
        <end position="109"/>
    </location>
</feature>
<feature type="region of interest" description="Disordered" evidence="5">
    <location>
        <begin position="169"/>
        <end position="202"/>
    </location>
</feature>
<feature type="compositionally biased region" description="Low complexity" evidence="5">
    <location>
        <begin position="65"/>
        <end position="75"/>
    </location>
</feature>
<feature type="compositionally biased region" description="Basic residues" evidence="5">
    <location>
        <begin position="92"/>
        <end position="104"/>
    </location>
</feature>
<feature type="modified residue" description="Phosphothreonine; by PLK4" evidence="3">
    <location>
        <position position="107"/>
    </location>
</feature>
<feature type="modified residue" description="Phosphoserine; by PLK4" evidence="3">
    <location>
        <position position="109"/>
    </location>
</feature>